<name>RL23_LYSSC</name>
<proteinExistence type="inferred from homology"/>
<reference key="1">
    <citation type="journal article" date="2008" name="J. Bacteriol.">
        <title>Complete genome sequence of the mosquitocidal bacterium Bacillus sphaericus C3-41 and comparison with those of closely related Bacillus species.</title>
        <authorList>
            <person name="Hu X."/>
            <person name="Fan W."/>
            <person name="Han B."/>
            <person name="Liu H."/>
            <person name="Zheng D."/>
            <person name="Li Q."/>
            <person name="Dong W."/>
            <person name="Yan J."/>
            <person name="Gao M."/>
            <person name="Berry C."/>
            <person name="Yuan Z."/>
        </authorList>
    </citation>
    <scope>NUCLEOTIDE SEQUENCE [LARGE SCALE GENOMIC DNA]</scope>
    <source>
        <strain>C3-41</strain>
    </source>
</reference>
<feature type="chain" id="PRO_1000144586" description="Large ribosomal subunit protein uL23">
    <location>
        <begin position="1"/>
        <end position="94"/>
    </location>
</feature>
<protein>
    <recommendedName>
        <fullName evidence="1">Large ribosomal subunit protein uL23</fullName>
    </recommendedName>
    <alternativeName>
        <fullName evidence="2">50S ribosomal protein L23</fullName>
    </alternativeName>
</protein>
<sequence>MEARDILKRPVITERSSELMAEKKYTFEVDTRANKTQVKDAVEEIFGVKVEKVNVLNYKGKFKRVGRYGGYTNKRRKAIVKLTADSKEIELFEM</sequence>
<comment type="function">
    <text evidence="1">One of the early assembly proteins it binds 23S rRNA. One of the proteins that surrounds the polypeptide exit tunnel on the outside of the ribosome. Forms the main docking site for trigger factor binding to the ribosome.</text>
</comment>
<comment type="subunit">
    <text evidence="1">Part of the 50S ribosomal subunit. Contacts protein L29, and trigger factor when it is bound to the ribosome.</text>
</comment>
<comment type="similarity">
    <text evidence="1">Belongs to the universal ribosomal protein uL23 family.</text>
</comment>
<accession>B1HMX8</accession>
<evidence type="ECO:0000255" key="1">
    <source>
        <dbReference type="HAMAP-Rule" id="MF_01369"/>
    </source>
</evidence>
<evidence type="ECO:0000305" key="2"/>
<organism>
    <name type="scientific">Lysinibacillus sphaericus (strain C3-41)</name>
    <dbReference type="NCBI Taxonomy" id="444177"/>
    <lineage>
        <taxon>Bacteria</taxon>
        <taxon>Bacillati</taxon>
        <taxon>Bacillota</taxon>
        <taxon>Bacilli</taxon>
        <taxon>Bacillales</taxon>
        <taxon>Bacillaceae</taxon>
        <taxon>Lysinibacillus</taxon>
    </lineage>
</organism>
<keyword id="KW-0687">Ribonucleoprotein</keyword>
<keyword id="KW-0689">Ribosomal protein</keyword>
<keyword id="KW-0694">RNA-binding</keyword>
<keyword id="KW-0699">rRNA-binding</keyword>
<gene>
    <name evidence="1" type="primary">rplW</name>
    <name type="ordered locus">Bsph_4612</name>
</gene>
<dbReference type="EMBL" id="CP000817">
    <property type="protein sequence ID" value="ACA42056.1"/>
    <property type="molecule type" value="Genomic_DNA"/>
</dbReference>
<dbReference type="RefSeq" id="WP_004233628.1">
    <property type="nucleotide sequence ID" value="NC_010382.1"/>
</dbReference>
<dbReference type="SMR" id="B1HMX8"/>
<dbReference type="EnsemblBacteria" id="ACA42056">
    <property type="protein sequence ID" value="ACA42056"/>
    <property type="gene ID" value="Bsph_4612"/>
</dbReference>
<dbReference type="GeneID" id="96596891"/>
<dbReference type="KEGG" id="lsp:Bsph_4612"/>
<dbReference type="HOGENOM" id="CLU_037562_3_2_9"/>
<dbReference type="Proteomes" id="UP000002164">
    <property type="component" value="Chromosome"/>
</dbReference>
<dbReference type="GO" id="GO:1990904">
    <property type="term" value="C:ribonucleoprotein complex"/>
    <property type="evidence" value="ECO:0007669"/>
    <property type="project" value="UniProtKB-KW"/>
</dbReference>
<dbReference type="GO" id="GO:0005840">
    <property type="term" value="C:ribosome"/>
    <property type="evidence" value="ECO:0007669"/>
    <property type="project" value="UniProtKB-KW"/>
</dbReference>
<dbReference type="GO" id="GO:0019843">
    <property type="term" value="F:rRNA binding"/>
    <property type="evidence" value="ECO:0007669"/>
    <property type="project" value="UniProtKB-UniRule"/>
</dbReference>
<dbReference type="GO" id="GO:0003735">
    <property type="term" value="F:structural constituent of ribosome"/>
    <property type="evidence" value="ECO:0007669"/>
    <property type="project" value="InterPro"/>
</dbReference>
<dbReference type="GO" id="GO:0006412">
    <property type="term" value="P:translation"/>
    <property type="evidence" value="ECO:0007669"/>
    <property type="project" value="UniProtKB-UniRule"/>
</dbReference>
<dbReference type="FunFam" id="3.30.70.330:FF:000001">
    <property type="entry name" value="50S ribosomal protein L23"/>
    <property type="match status" value="1"/>
</dbReference>
<dbReference type="Gene3D" id="3.30.70.330">
    <property type="match status" value="1"/>
</dbReference>
<dbReference type="HAMAP" id="MF_01369_B">
    <property type="entry name" value="Ribosomal_uL23_B"/>
    <property type="match status" value="1"/>
</dbReference>
<dbReference type="InterPro" id="IPR012677">
    <property type="entry name" value="Nucleotide-bd_a/b_plait_sf"/>
</dbReference>
<dbReference type="InterPro" id="IPR013025">
    <property type="entry name" value="Ribosomal_uL23-like"/>
</dbReference>
<dbReference type="InterPro" id="IPR012678">
    <property type="entry name" value="Ribosomal_uL23/eL15/eS24_sf"/>
</dbReference>
<dbReference type="InterPro" id="IPR001014">
    <property type="entry name" value="Ribosomal_uL23_CS"/>
</dbReference>
<dbReference type="NCBIfam" id="NF004363">
    <property type="entry name" value="PRK05738.2-4"/>
    <property type="match status" value="1"/>
</dbReference>
<dbReference type="PANTHER" id="PTHR11620">
    <property type="entry name" value="60S RIBOSOMAL PROTEIN L23A"/>
    <property type="match status" value="1"/>
</dbReference>
<dbReference type="Pfam" id="PF00276">
    <property type="entry name" value="Ribosomal_L23"/>
    <property type="match status" value="1"/>
</dbReference>
<dbReference type="SUPFAM" id="SSF54189">
    <property type="entry name" value="Ribosomal proteins S24e, L23 and L15e"/>
    <property type="match status" value="1"/>
</dbReference>
<dbReference type="PROSITE" id="PS00050">
    <property type="entry name" value="RIBOSOMAL_L23"/>
    <property type="match status" value="1"/>
</dbReference>